<dbReference type="EC" id="2.1.2.11" evidence="1"/>
<dbReference type="EMBL" id="CP000908">
    <property type="protein sequence ID" value="ABY30171.1"/>
    <property type="molecule type" value="Genomic_DNA"/>
</dbReference>
<dbReference type="RefSeq" id="WP_003602574.1">
    <property type="nucleotide sequence ID" value="NC_010172.1"/>
</dbReference>
<dbReference type="SMR" id="A9W3L5"/>
<dbReference type="GeneID" id="72989428"/>
<dbReference type="KEGG" id="mex:Mext_1772"/>
<dbReference type="eggNOG" id="COG0413">
    <property type="taxonomic scope" value="Bacteria"/>
</dbReference>
<dbReference type="HOGENOM" id="CLU_036645_1_0_5"/>
<dbReference type="BioCyc" id="MEXT419610:MEXT_RS08985-MONOMER"/>
<dbReference type="UniPathway" id="UPA00028">
    <property type="reaction ID" value="UER00003"/>
</dbReference>
<dbReference type="GO" id="GO:0005737">
    <property type="term" value="C:cytoplasm"/>
    <property type="evidence" value="ECO:0007669"/>
    <property type="project" value="UniProtKB-SubCell"/>
</dbReference>
<dbReference type="GO" id="GO:0003864">
    <property type="term" value="F:3-methyl-2-oxobutanoate hydroxymethyltransferase activity"/>
    <property type="evidence" value="ECO:0007669"/>
    <property type="project" value="UniProtKB-UniRule"/>
</dbReference>
<dbReference type="GO" id="GO:0000287">
    <property type="term" value="F:magnesium ion binding"/>
    <property type="evidence" value="ECO:0007669"/>
    <property type="project" value="TreeGrafter"/>
</dbReference>
<dbReference type="GO" id="GO:0015940">
    <property type="term" value="P:pantothenate biosynthetic process"/>
    <property type="evidence" value="ECO:0007669"/>
    <property type="project" value="UniProtKB-UniRule"/>
</dbReference>
<dbReference type="CDD" id="cd06557">
    <property type="entry name" value="KPHMT-like"/>
    <property type="match status" value="1"/>
</dbReference>
<dbReference type="FunFam" id="3.20.20.60:FF:000003">
    <property type="entry name" value="3-methyl-2-oxobutanoate hydroxymethyltransferase"/>
    <property type="match status" value="1"/>
</dbReference>
<dbReference type="Gene3D" id="3.20.20.60">
    <property type="entry name" value="Phosphoenolpyruvate-binding domains"/>
    <property type="match status" value="1"/>
</dbReference>
<dbReference type="HAMAP" id="MF_00156">
    <property type="entry name" value="PanB"/>
    <property type="match status" value="1"/>
</dbReference>
<dbReference type="InterPro" id="IPR003700">
    <property type="entry name" value="Pantoate_hydroxy_MeTrfase"/>
</dbReference>
<dbReference type="InterPro" id="IPR015813">
    <property type="entry name" value="Pyrv/PenolPyrv_kinase-like_dom"/>
</dbReference>
<dbReference type="InterPro" id="IPR040442">
    <property type="entry name" value="Pyrv_kinase-like_dom_sf"/>
</dbReference>
<dbReference type="NCBIfam" id="TIGR00222">
    <property type="entry name" value="panB"/>
    <property type="match status" value="1"/>
</dbReference>
<dbReference type="NCBIfam" id="NF001452">
    <property type="entry name" value="PRK00311.1"/>
    <property type="match status" value="1"/>
</dbReference>
<dbReference type="PANTHER" id="PTHR20881">
    <property type="entry name" value="3-METHYL-2-OXOBUTANOATE HYDROXYMETHYLTRANSFERASE"/>
    <property type="match status" value="1"/>
</dbReference>
<dbReference type="PANTHER" id="PTHR20881:SF0">
    <property type="entry name" value="3-METHYL-2-OXOBUTANOATE HYDROXYMETHYLTRANSFERASE"/>
    <property type="match status" value="1"/>
</dbReference>
<dbReference type="Pfam" id="PF02548">
    <property type="entry name" value="Pantoate_transf"/>
    <property type="match status" value="1"/>
</dbReference>
<dbReference type="PIRSF" id="PIRSF000388">
    <property type="entry name" value="Pantoate_hydroxy_MeTrfase"/>
    <property type="match status" value="1"/>
</dbReference>
<dbReference type="SUPFAM" id="SSF51621">
    <property type="entry name" value="Phosphoenolpyruvate/pyruvate domain"/>
    <property type="match status" value="1"/>
</dbReference>
<protein>
    <recommendedName>
        <fullName evidence="1">3-methyl-2-oxobutanoate hydroxymethyltransferase</fullName>
        <ecNumber evidence="1">2.1.2.11</ecNumber>
    </recommendedName>
    <alternativeName>
        <fullName evidence="1">Ketopantoate hydroxymethyltransferase</fullName>
        <shortName evidence="1">KPHMT</shortName>
    </alternativeName>
</protein>
<sequence length="274" mass="29162">MSQVVQTRRLQAVDLIKRKAEGRKIISLTAYHAHTAGIVDAYCDFVLVGDSLGMVMHGMESTLPVTLEMMILQAQAVMRGTSRALVVVDMPFGSYEASREQAFLNAARVLKETGAGAIKLEGGARFAETVAFLTERGVPVMGHIGLTPQSVNTMGGFKVQGHGAGDEDRLRADARAISDAGAFAIVLEGIVEPVARAIATDPAIRAATIGIGATAACDGQILVLEDMLGLSDRVPRFVKSYGSLRAHIEEAVRAYADEVQAGRFPAEGHTYPPR</sequence>
<keyword id="KW-0963">Cytoplasm</keyword>
<keyword id="KW-0460">Magnesium</keyword>
<keyword id="KW-0479">Metal-binding</keyword>
<keyword id="KW-0566">Pantothenate biosynthesis</keyword>
<keyword id="KW-0808">Transferase</keyword>
<proteinExistence type="inferred from homology"/>
<gene>
    <name evidence="1" type="primary">panB</name>
    <name type="ordered locus">Mext_1772</name>
</gene>
<evidence type="ECO:0000255" key="1">
    <source>
        <dbReference type="HAMAP-Rule" id="MF_00156"/>
    </source>
</evidence>
<name>PANB_METEP</name>
<reference key="1">
    <citation type="submission" date="2007-12" db="EMBL/GenBank/DDBJ databases">
        <title>Complete sequence of Methylobacterium extorquens PA1.</title>
        <authorList>
            <consortium name="US DOE Joint Genome Institute"/>
            <person name="Copeland A."/>
            <person name="Lucas S."/>
            <person name="Lapidus A."/>
            <person name="Barry K."/>
            <person name="Glavina del Rio T."/>
            <person name="Dalin E."/>
            <person name="Tice H."/>
            <person name="Pitluck S."/>
            <person name="Saunders E."/>
            <person name="Brettin T."/>
            <person name="Bruce D."/>
            <person name="Detter J.C."/>
            <person name="Han C."/>
            <person name="Schmutz J."/>
            <person name="Larimer F."/>
            <person name="Land M."/>
            <person name="Hauser L."/>
            <person name="Kyrpides N."/>
            <person name="Kim E."/>
            <person name="Marx C."/>
            <person name="Richardson P."/>
        </authorList>
    </citation>
    <scope>NUCLEOTIDE SEQUENCE [LARGE SCALE GENOMIC DNA]</scope>
    <source>
        <strain>PA1</strain>
    </source>
</reference>
<organism>
    <name type="scientific">Methylorubrum extorquens (strain PA1)</name>
    <name type="common">Methylobacterium extorquens</name>
    <dbReference type="NCBI Taxonomy" id="419610"/>
    <lineage>
        <taxon>Bacteria</taxon>
        <taxon>Pseudomonadati</taxon>
        <taxon>Pseudomonadota</taxon>
        <taxon>Alphaproteobacteria</taxon>
        <taxon>Hyphomicrobiales</taxon>
        <taxon>Methylobacteriaceae</taxon>
        <taxon>Methylorubrum</taxon>
    </lineage>
</organism>
<comment type="function">
    <text evidence="1">Catalyzes the reversible reaction in which hydroxymethyl group from 5,10-methylenetetrahydrofolate is transferred onto alpha-ketoisovalerate to form ketopantoate.</text>
</comment>
<comment type="catalytic activity">
    <reaction evidence="1">
        <text>3-methyl-2-oxobutanoate + (6R)-5,10-methylene-5,6,7,8-tetrahydrofolate + H2O = 2-dehydropantoate + (6S)-5,6,7,8-tetrahydrofolate</text>
        <dbReference type="Rhea" id="RHEA:11824"/>
        <dbReference type="ChEBI" id="CHEBI:11561"/>
        <dbReference type="ChEBI" id="CHEBI:11851"/>
        <dbReference type="ChEBI" id="CHEBI:15377"/>
        <dbReference type="ChEBI" id="CHEBI:15636"/>
        <dbReference type="ChEBI" id="CHEBI:57453"/>
        <dbReference type="EC" id="2.1.2.11"/>
    </reaction>
</comment>
<comment type="cofactor">
    <cofactor evidence="1">
        <name>Mg(2+)</name>
        <dbReference type="ChEBI" id="CHEBI:18420"/>
    </cofactor>
    <text evidence="1">Binds 1 Mg(2+) ion per subunit.</text>
</comment>
<comment type="pathway">
    <text evidence="1">Cofactor biosynthesis; (R)-pantothenate biosynthesis; (R)-pantoate from 3-methyl-2-oxobutanoate: step 1/2.</text>
</comment>
<comment type="subunit">
    <text evidence="1">Homodecamer; pentamer of dimers.</text>
</comment>
<comment type="subcellular location">
    <subcellularLocation>
        <location evidence="1">Cytoplasm</location>
    </subcellularLocation>
</comment>
<comment type="similarity">
    <text evidence="1">Belongs to the PanB family.</text>
</comment>
<feature type="chain" id="PRO_1000096983" description="3-methyl-2-oxobutanoate hydroxymethyltransferase">
    <location>
        <begin position="1"/>
        <end position="274"/>
    </location>
</feature>
<feature type="active site" description="Proton acceptor" evidence="1">
    <location>
        <position position="188"/>
    </location>
</feature>
<feature type="binding site" evidence="1">
    <location>
        <begin position="50"/>
        <end position="51"/>
    </location>
    <ligand>
        <name>3-methyl-2-oxobutanoate</name>
        <dbReference type="ChEBI" id="CHEBI:11851"/>
    </ligand>
</feature>
<feature type="binding site" evidence="1">
    <location>
        <position position="50"/>
    </location>
    <ligand>
        <name>Mg(2+)</name>
        <dbReference type="ChEBI" id="CHEBI:18420"/>
    </ligand>
</feature>
<feature type="binding site" evidence="1">
    <location>
        <position position="89"/>
    </location>
    <ligand>
        <name>3-methyl-2-oxobutanoate</name>
        <dbReference type="ChEBI" id="CHEBI:11851"/>
    </ligand>
</feature>
<feature type="binding site" evidence="1">
    <location>
        <position position="89"/>
    </location>
    <ligand>
        <name>Mg(2+)</name>
        <dbReference type="ChEBI" id="CHEBI:18420"/>
    </ligand>
</feature>
<feature type="binding site" evidence="1">
    <location>
        <position position="119"/>
    </location>
    <ligand>
        <name>3-methyl-2-oxobutanoate</name>
        <dbReference type="ChEBI" id="CHEBI:11851"/>
    </ligand>
</feature>
<feature type="binding site" evidence="1">
    <location>
        <position position="121"/>
    </location>
    <ligand>
        <name>Mg(2+)</name>
        <dbReference type="ChEBI" id="CHEBI:18420"/>
    </ligand>
</feature>
<accession>A9W3L5</accession>